<organismHost>
    <name type="scientific">Bdellovibrio bacteriovorus</name>
    <dbReference type="NCBI Taxonomy" id="959"/>
</organismHost>
<dbReference type="EMBL" id="AF306496">
    <property type="protein sequence ID" value="AAG45340.1"/>
    <property type="molecule type" value="Genomic_DNA"/>
</dbReference>
<dbReference type="RefSeq" id="NP_073538.1">
    <property type="nucleotide sequence ID" value="NC_002643.1"/>
</dbReference>
<dbReference type="SMR" id="Q9G059"/>
<dbReference type="KEGG" id="vg:918756"/>
<dbReference type="OrthoDB" id="6266at10239"/>
<dbReference type="Proteomes" id="UP000002418">
    <property type="component" value="Genome"/>
</dbReference>
<dbReference type="GO" id="GO:0030430">
    <property type="term" value="C:host cell cytoplasm"/>
    <property type="evidence" value="ECO:0007669"/>
    <property type="project" value="UniProtKB-SubCell"/>
</dbReference>
<dbReference type="GO" id="GO:0039615">
    <property type="term" value="C:T=1 icosahedral viral capsid"/>
    <property type="evidence" value="ECO:0007669"/>
    <property type="project" value="UniProtKB-KW"/>
</dbReference>
<dbReference type="GO" id="GO:0005198">
    <property type="term" value="F:structural molecule activity"/>
    <property type="evidence" value="ECO:0007669"/>
    <property type="project" value="InterPro"/>
</dbReference>
<dbReference type="Gene3D" id="2.60.169.10">
    <property type="entry name" value="Microviridae F protein"/>
    <property type="match status" value="2"/>
</dbReference>
<dbReference type="InterPro" id="IPR016184">
    <property type="entry name" value="Capsid/spike_ssDNA_virus"/>
</dbReference>
<dbReference type="InterPro" id="IPR003514">
    <property type="entry name" value="Microviridae_protein_F"/>
</dbReference>
<dbReference type="InterPro" id="IPR037002">
    <property type="entry name" value="Microviridae_protein_F_sf"/>
</dbReference>
<dbReference type="Pfam" id="PF02305">
    <property type="entry name" value="Phage_F"/>
    <property type="match status" value="1"/>
</dbReference>
<dbReference type="SUPFAM" id="SSF88645">
    <property type="entry name" value="ssDNA viruses"/>
    <property type="match status" value="1"/>
</dbReference>
<organism>
    <name type="scientific">Bdellovibrio phage phiMH2K</name>
    <name type="common">Bacteriophage phiMH2K</name>
    <dbReference type="NCBI Taxonomy" id="145579"/>
    <lineage>
        <taxon>Viruses</taxon>
        <taxon>Monodnaviria</taxon>
        <taxon>Sangervirae</taxon>
        <taxon>Phixviricota</taxon>
        <taxon>Malgrandaviricetes</taxon>
        <taxon>Petitvirales</taxon>
        <taxon>Microviridae</taxon>
        <taxon>Gokushovirinae</taxon>
        <taxon>Bdellomicrovirus</taxon>
        <taxon>Bdellomicrovirus MH2K</taxon>
    </lineage>
</organism>
<sequence>MKLGSRHNQHSFAQIPSVHTTRSKFNRSFGTKDTFKFDDLTPIFIDEILPGDTINMNTKTFIRLATQVVPVMDRMMLDFYFFFVPCRLVWDNWEKFNGAQDNPSDSTDYLIPTITAPAGGFENMSIYDHFGIPTQVANLEINALPFRAYNLIYNDWFRDQNLIGKIAVPKGDGPDNHADYQLLKAAKPHDYFTSALPWPQKGMAVEMPIGNSAPITYVPNAGNGPYPHFNWVQTPGGPGNNGALSQVTFGGQKAISAAGNDPIGYDPQGTLIADLSSATAATINQLRQAMMMQSLLELDARGGTRYVEILKSHFNVISLDFRLQRPEYLSGGTIDLQQNPVPQTSSSTTDSPQGNLAAFSTASEFGNKIGFSKSFVEHGYVLGFIRARGQVTYQQGLHKMWSRQTRWDFFWPKFQELGEQAILNKEIYAQGNATDSEIFGYQERYGEYRFRPSEIKGQFRSNFAESLDVWHLAEYFTVKPSLNKTFIESNTPIERSLVVTRPDYPDLIGDFWFDYTHVRPMVTYGVPATFGRF</sequence>
<name>CAPSD_BPPHM</name>
<reference key="1">
    <citation type="journal article" date="2002" name="J. Bacteriol.">
        <title>Microviridae, a family divided: isolation, characterization, and genome sequence of phiMH2K, a bacteriophage of the obligate intracellular parasitic bacterium Bdellovibrio bacteriovorus.</title>
        <authorList>
            <person name="Brentlinger K.L."/>
            <person name="Hafenstein S."/>
            <person name="Novak C.R."/>
            <person name="Fane B.A."/>
            <person name="Borgon R."/>
            <person name="McKenna R."/>
            <person name="Agbandje-McKenna M."/>
        </authorList>
    </citation>
    <scope>NUCLEOTIDE SEQUENCE [GENOMIC DNA]</scope>
</reference>
<proteinExistence type="inferred from homology"/>
<gene>
    <name type="ORF">ORF1</name>
</gene>
<evidence type="ECO:0000250" key="1"/>
<evidence type="ECO:0000256" key="2">
    <source>
        <dbReference type="SAM" id="MobiDB-lite"/>
    </source>
</evidence>
<evidence type="ECO:0000305" key="3"/>
<comment type="function">
    <text evidence="1">Assembles to form an icosahedral capsid with a T=1 symmetry.</text>
</comment>
<comment type="subcellular location">
    <subcellularLocation>
        <location>Virion</location>
    </subcellularLocation>
    <subcellularLocation>
        <location evidence="1">Host cytoplasm</location>
    </subcellularLocation>
</comment>
<comment type="similarity">
    <text evidence="3">Belongs to the microviridae F protein family.</text>
</comment>
<accession>Q9G059</accession>
<protein>
    <recommendedName>
        <fullName>Capsid protein VP1</fullName>
        <shortName>VP1</shortName>
    </recommendedName>
</protein>
<keyword id="KW-0167">Capsid protein</keyword>
<keyword id="KW-1035">Host cytoplasm</keyword>
<keyword id="KW-1185">Reference proteome</keyword>
<keyword id="KW-1140">T=1 icosahedral capsid protein</keyword>
<keyword id="KW-0946">Virion</keyword>
<feature type="chain" id="PRO_0000372057" description="Capsid protein VP1">
    <location>
        <begin position="1"/>
        <end position="533"/>
    </location>
</feature>
<feature type="region of interest" description="Disordered" evidence="2">
    <location>
        <begin position="333"/>
        <end position="353"/>
    </location>
</feature>